<name>RPOZ_STRPI</name>
<evidence type="ECO:0000255" key="1">
    <source>
        <dbReference type="HAMAP-Rule" id="MF_00366"/>
    </source>
</evidence>
<evidence type="ECO:0000256" key="2">
    <source>
        <dbReference type="SAM" id="MobiDB-lite"/>
    </source>
</evidence>
<dbReference type="EC" id="2.7.7.6" evidence="1"/>
<dbReference type="EMBL" id="CP000936">
    <property type="protein sequence ID" value="ACA36793.1"/>
    <property type="molecule type" value="Genomic_DNA"/>
</dbReference>
<dbReference type="RefSeq" id="WP_000979235.1">
    <property type="nucleotide sequence ID" value="NC_010380.1"/>
</dbReference>
<dbReference type="SMR" id="B1I7K0"/>
<dbReference type="GeneID" id="93739175"/>
<dbReference type="KEGG" id="spv:SPH_1846"/>
<dbReference type="HOGENOM" id="CLU_125406_0_0_9"/>
<dbReference type="Proteomes" id="UP000002163">
    <property type="component" value="Chromosome"/>
</dbReference>
<dbReference type="GO" id="GO:0000428">
    <property type="term" value="C:DNA-directed RNA polymerase complex"/>
    <property type="evidence" value="ECO:0007669"/>
    <property type="project" value="UniProtKB-KW"/>
</dbReference>
<dbReference type="GO" id="GO:0003677">
    <property type="term" value="F:DNA binding"/>
    <property type="evidence" value="ECO:0007669"/>
    <property type="project" value="UniProtKB-UniRule"/>
</dbReference>
<dbReference type="GO" id="GO:0003899">
    <property type="term" value="F:DNA-directed RNA polymerase activity"/>
    <property type="evidence" value="ECO:0007669"/>
    <property type="project" value="UniProtKB-UniRule"/>
</dbReference>
<dbReference type="GO" id="GO:0006351">
    <property type="term" value="P:DNA-templated transcription"/>
    <property type="evidence" value="ECO:0007669"/>
    <property type="project" value="UniProtKB-UniRule"/>
</dbReference>
<dbReference type="Gene3D" id="3.90.940.10">
    <property type="match status" value="1"/>
</dbReference>
<dbReference type="HAMAP" id="MF_00366">
    <property type="entry name" value="RNApol_bact_RpoZ"/>
    <property type="match status" value="1"/>
</dbReference>
<dbReference type="InterPro" id="IPR003716">
    <property type="entry name" value="DNA-dir_RNA_pol_omega"/>
</dbReference>
<dbReference type="InterPro" id="IPR006110">
    <property type="entry name" value="Pol_omega/Rpo6/RPB6"/>
</dbReference>
<dbReference type="InterPro" id="IPR036161">
    <property type="entry name" value="RPB6/omega-like_sf"/>
</dbReference>
<dbReference type="NCBIfam" id="TIGR00690">
    <property type="entry name" value="rpoZ"/>
    <property type="match status" value="1"/>
</dbReference>
<dbReference type="PANTHER" id="PTHR34476">
    <property type="entry name" value="DNA-DIRECTED RNA POLYMERASE SUBUNIT OMEGA"/>
    <property type="match status" value="1"/>
</dbReference>
<dbReference type="PANTHER" id="PTHR34476:SF1">
    <property type="entry name" value="DNA-DIRECTED RNA POLYMERASE SUBUNIT OMEGA"/>
    <property type="match status" value="1"/>
</dbReference>
<dbReference type="Pfam" id="PF01192">
    <property type="entry name" value="RNA_pol_Rpb6"/>
    <property type="match status" value="1"/>
</dbReference>
<dbReference type="SMART" id="SM01409">
    <property type="entry name" value="RNA_pol_Rpb6"/>
    <property type="match status" value="1"/>
</dbReference>
<dbReference type="SUPFAM" id="SSF63562">
    <property type="entry name" value="RPB6/omega subunit-like"/>
    <property type="match status" value="1"/>
</dbReference>
<comment type="function">
    <text evidence="1">Promotes RNA polymerase assembly. Latches the N- and C-terminal regions of the beta' subunit thereby facilitating its interaction with the beta and alpha subunits.</text>
</comment>
<comment type="catalytic activity">
    <reaction evidence="1">
        <text>RNA(n) + a ribonucleoside 5'-triphosphate = RNA(n+1) + diphosphate</text>
        <dbReference type="Rhea" id="RHEA:21248"/>
        <dbReference type="Rhea" id="RHEA-COMP:14527"/>
        <dbReference type="Rhea" id="RHEA-COMP:17342"/>
        <dbReference type="ChEBI" id="CHEBI:33019"/>
        <dbReference type="ChEBI" id="CHEBI:61557"/>
        <dbReference type="ChEBI" id="CHEBI:140395"/>
        <dbReference type="EC" id="2.7.7.6"/>
    </reaction>
</comment>
<comment type="subunit">
    <text evidence="1">The RNAP catalytic core consists of 2 alpha, 1 beta, 1 beta' and 1 omega subunit. When a sigma factor is associated with the core the holoenzyme is formed, which can initiate transcription.</text>
</comment>
<comment type="similarity">
    <text evidence="1">Belongs to the RNA polymerase subunit omega family.</text>
</comment>
<proteinExistence type="inferred from homology"/>
<organism>
    <name type="scientific">Streptococcus pneumoniae (strain Hungary19A-6)</name>
    <dbReference type="NCBI Taxonomy" id="487214"/>
    <lineage>
        <taxon>Bacteria</taxon>
        <taxon>Bacillati</taxon>
        <taxon>Bacillota</taxon>
        <taxon>Bacilli</taxon>
        <taxon>Lactobacillales</taxon>
        <taxon>Streptococcaceae</taxon>
        <taxon>Streptococcus</taxon>
    </lineage>
</organism>
<reference key="1">
    <citation type="journal article" date="2010" name="Genome Biol.">
        <title>Structure and dynamics of the pan-genome of Streptococcus pneumoniae and closely related species.</title>
        <authorList>
            <person name="Donati C."/>
            <person name="Hiller N.L."/>
            <person name="Tettelin H."/>
            <person name="Muzzi A."/>
            <person name="Croucher N.J."/>
            <person name="Angiuoli S.V."/>
            <person name="Oggioni M."/>
            <person name="Dunning Hotopp J.C."/>
            <person name="Hu F.Z."/>
            <person name="Riley D.R."/>
            <person name="Covacci A."/>
            <person name="Mitchell T.J."/>
            <person name="Bentley S.D."/>
            <person name="Kilian M."/>
            <person name="Ehrlich G.D."/>
            <person name="Rappuoli R."/>
            <person name="Moxon E.R."/>
            <person name="Masignani V."/>
        </authorList>
    </citation>
    <scope>NUCLEOTIDE SEQUENCE [LARGE SCALE GENOMIC DNA]</scope>
    <source>
        <strain>Hungary19A-6</strain>
    </source>
</reference>
<keyword id="KW-0240">DNA-directed RNA polymerase</keyword>
<keyword id="KW-0548">Nucleotidyltransferase</keyword>
<keyword id="KW-0804">Transcription</keyword>
<keyword id="KW-0808">Transferase</keyword>
<sequence length="104" mass="11924">MMLKPSIDTLLDKVPSKYSLVILEAKRAHELEAGAPATQGFKSEKSTLRALEEIESGNVTIHPDPEGKREAVRRRIEEEKRRKEEEEKKIKEQIAKEKEDGEKI</sequence>
<protein>
    <recommendedName>
        <fullName evidence="1">DNA-directed RNA polymerase subunit omega</fullName>
        <shortName evidence="1">RNAP omega subunit</shortName>
        <ecNumber evidence="1">2.7.7.6</ecNumber>
    </recommendedName>
    <alternativeName>
        <fullName evidence="1">RNA polymerase omega subunit</fullName>
    </alternativeName>
    <alternativeName>
        <fullName evidence="1">Transcriptase subunit omega</fullName>
    </alternativeName>
</protein>
<accession>B1I7K0</accession>
<gene>
    <name evidence="1" type="primary">rpoZ</name>
    <name type="ordered locus">SPH_1846</name>
</gene>
<feature type="chain" id="PRO_1000121280" description="DNA-directed RNA polymerase subunit omega">
    <location>
        <begin position="1"/>
        <end position="104"/>
    </location>
</feature>
<feature type="region of interest" description="Disordered" evidence="2">
    <location>
        <begin position="53"/>
        <end position="104"/>
    </location>
</feature>
<feature type="compositionally biased region" description="Basic and acidic residues" evidence="2">
    <location>
        <begin position="63"/>
        <end position="104"/>
    </location>
</feature>